<proteinExistence type="inferred from homology"/>
<comment type="function">
    <text evidence="1">Catalyzes the N-acylation of UDP-3-O-acylglucosamine using 3-hydroxyacyl-ACP as the acyl donor. Is involved in the biosynthesis of lipid A, a phosphorylated glycolipid that anchors the lipopolysaccharide to the outer membrane of the cell.</text>
</comment>
<comment type="catalytic activity">
    <reaction evidence="1">
        <text>a UDP-3-O-[(3R)-3-hydroxyacyl]-alpha-D-glucosamine + a (3R)-hydroxyacyl-[ACP] = a UDP-2-N,3-O-bis[(3R)-3-hydroxyacyl]-alpha-D-glucosamine + holo-[ACP] + H(+)</text>
        <dbReference type="Rhea" id="RHEA:53836"/>
        <dbReference type="Rhea" id="RHEA-COMP:9685"/>
        <dbReference type="Rhea" id="RHEA-COMP:9945"/>
        <dbReference type="ChEBI" id="CHEBI:15378"/>
        <dbReference type="ChEBI" id="CHEBI:64479"/>
        <dbReference type="ChEBI" id="CHEBI:78827"/>
        <dbReference type="ChEBI" id="CHEBI:137740"/>
        <dbReference type="ChEBI" id="CHEBI:137748"/>
        <dbReference type="EC" id="2.3.1.191"/>
    </reaction>
</comment>
<comment type="pathway">
    <text evidence="1">Bacterial outer membrane biogenesis; LPS lipid A biosynthesis.</text>
</comment>
<comment type="subunit">
    <text evidence="1">Homotrimer.</text>
</comment>
<comment type="similarity">
    <text evidence="1">Belongs to the transferase hexapeptide repeat family. LpxD subfamily.</text>
</comment>
<name>LPXD_VEREI</name>
<dbReference type="EC" id="2.3.1.191" evidence="1"/>
<dbReference type="EMBL" id="CP000542">
    <property type="protein sequence ID" value="ABM57209.1"/>
    <property type="molecule type" value="Genomic_DNA"/>
</dbReference>
<dbReference type="RefSeq" id="WP_011809216.1">
    <property type="nucleotide sequence ID" value="NC_008786.1"/>
</dbReference>
<dbReference type="SMR" id="A1WHV2"/>
<dbReference type="STRING" id="391735.Veis_1448"/>
<dbReference type="GeneID" id="76460073"/>
<dbReference type="KEGG" id="vei:Veis_1448"/>
<dbReference type="eggNOG" id="COG1044">
    <property type="taxonomic scope" value="Bacteria"/>
</dbReference>
<dbReference type="HOGENOM" id="CLU_049865_0_1_4"/>
<dbReference type="OrthoDB" id="9784739at2"/>
<dbReference type="UniPathway" id="UPA00973"/>
<dbReference type="Proteomes" id="UP000000374">
    <property type="component" value="Chromosome"/>
</dbReference>
<dbReference type="GO" id="GO:0016020">
    <property type="term" value="C:membrane"/>
    <property type="evidence" value="ECO:0007669"/>
    <property type="project" value="GOC"/>
</dbReference>
<dbReference type="GO" id="GO:0016410">
    <property type="term" value="F:N-acyltransferase activity"/>
    <property type="evidence" value="ECO:0007669"/>
    <property type="project" value="InterPro"/>
</dbReference>
<dbReference type="GO" id="GO:0009245">
    <property type="term" value="P:lipid A biosynthetic process"/>
    <property type="evidence" value="ECO:0007669"/>
    <property type="project" value="UniProtKB-UniRule"/>
</dbReference>
<dbReference type="CDD" id="cd03352">
    <property type="entry name" value="LbH_LpxD"/>
    <property type="match status" value="1"/>
</dbReference>
<dbReference type="Gene3D" id="2.160.10.10">
    <property type="entry name" value="Hexapeptide repeat proteins"/>
    <property type="match status" value="1"/>
</dbReference>
<dbReference type="Gene3D" id="3.40.1390.10">
    <property type="entry name" value="MurE/MurF, N-terminal domain"/>
    <property type="match status" value="1"/>
</dbReference>
<dbReference type="HAMAP" id="MF_00523">
    <property type="entry name" value="LpxD"/>
    <property type="match status" value="1"/>
</dbReference>
<dbReference type="InterPro" id="IPR001451">
    <property type="entry name" value="Hexapep"/>
</dbReference>
<dbReference type="InterPro" id="IPR018357">
    <property type="entry name" value="Hexapep_transf_CS"/>
</dbReference>
<dbReference type="InterPro" id="IPR007691">
    <property type="entry name" value="LpxD"/>
</dbReference>
<dbReference type="InterPro" id="IPR011004">
    <property type="entry name" value="Trimer_LpxA-like_sf"/>
</dbReference>
<dbReference type="InterPro" id="IPR020573">
    <property type="entry name" value="UDP_GlcNAc_AcTrfase_non-rep"/>
</dbReference>
<dbReference type="NCBIfam" id="TIGR01853">
    <property type="entry name" value="lipid_A_lpxD"/>
    <property type="match status" value="1"/>
</dbReference>
<dbReference type="NCBIfam" id="NF002060">
    <property type="entry name" value="PRK00892.1"/>
    <property type="match status" value="1"/>
</dbReference>
<dbReference type="PANTHER" id="PTHR43378">
    <property type="entry name" value="UDP-3-O-ACYLGLUCOSAMINE N-ACYLTRANSFERASE"/>
    <property type="match status" value="1"/>
</dbReference>
<dbReference type="PANTHER" id="PTHR43378:SF2">
    <property type="entry name" value="UDP-3-O-ACYLGLUCOSAMINE N-ACYLTRANSFERASE 1, MITOCHONDRIAL-RELATED"/>
    <property type="match status" value="1"/>
</dbReference>
<dbReference type="Pfam" id="PF00132">
    <property type="entry name" value="Hexapep"/>
    <property type="match status" value="1"/>
</dbReference>
<dbReference type="Pfam" id="PF14602">
    <property type="entry name" value="Hexapep_2"/>
    <property type="match status" value="2"/>
</dbReference>
<dbReference type="Pfam" id="PF04613">
    <property type="entry name" value="LpxD"/>
    <property type="match status" value="1"/>
</dbReference>
<dbReference type="SUPFAM" id="SSF51161">
    <property type="entry name" value="Trimeric LpxA-like enzymes"/>
    <property type="match status" value="1"/>
</dbReference>
<dbReference type="PROSITE" id="PS00101">
    <property type="entry name" value="HEXAPEP_TRANSFERASES"/>
    <property type="match status" value="1"/>
</dbReference>
<reference key="1">
    <citation type="submission" date="2006-12" db="EMBL/GenBank/DDBJ databases">
        <title>Complete sequence of chromosome 1 of Verminephrobacter eiseniae EF01-2.</title>
        <authorList>
            <person name="Copeland A."/>
            <person name="Lucas S."/>
            <person name="Lapidus A."/>
            <person name="Barry K."/>
            <person name="Detter J.C."/>
            <person name="Glavina del Rio T."/>
            <person name="Dalin E."/>
            <person name="Tice H."/>
            <person name="Pitluck S."/>
            <person name="Chertkov O."/>
            <person name="Brettin T."/>
            <person name="Bruce D."/>
            <person name="Han C."/>
            <person name="Tapia R."/>
            <person name="Gilna P."/>
            <person name="Schmutz J."/>
            <person name="Larimer F."/>
            <person name="Land M."/>
            <person name="Hauser L."/>
            <person name="Kyrpides N."/>
            <person name="Kim E."/>
            <person name="Stahl D."/>
            <person name="Richardson P."/>
        </authorList>
    </citation>
    <scope>NUCLEOTIDE SEQUENCE [LARGE SCALE GENOMIC DNA]</scope>
    <source>
        <strain>EF01-2</strain>
    </source>
</reference>
<accession>A1WHV2</accession>
<organism>
    <name type="scientific">Verminephrobacter eiseniae (strain EF01-2)</name>
    <dbReference type="NCBI Taxonomy" id="391735"/>
    <lineage>
        <taxon>Bacteria</taxon>
        <taxon>Pseudomonadati</taxon>
        <taxon>Pseudomonadota</taxon>
        <taxon>Betaproteobacteria</taxon>
        <taxon>Burkholderiales</taxon>
        <taxon>Comamonadaceae</taxon>
        <taxon>Verminephrobacter</taxon>
    </lineage>
</organism>
<evidence type="ECO:0000255" key="1">
    <source>
        <dbReference type="HAMAP-Rule" id="MF_00523"/>
    </source>
</evidence>
<sequence>MSLLLGQIVDALGGSLQGGSRDTPICRIAPLQAAGPGDLSVLSHPRYQQQLAASRAACVIVAPALRAAALARGACILAEQPYAYFARATQLWRQHHAPAPAPGVHASAVLDPTAQVHPTASIGPLCILERGAQVGAGSRLQARVTVGADCRIGARCLLHAGVVVGADGFGFAPEDGQWIKIEQLGAVRIGDDVEIGANTCIDRGTLQDTVIEDGVKLDNLIQIGHNVRIGKHSALAGCVGVAGSARIGAHCTIGGGAIVLGHLELADHVHISAATVVTRSLTRPGQYTGLFPIDDNARWEKNAATLKQLHSLRERIKALEQALKAA</sequence>
<feature type="chain" id="PRO_1000050964" description="UDP-3-O-acylglucosamine N-acyltransferase">
    <location>
        <begin position="1"/>
        <end position="326"/>
    </location>
</feature>
<feature type="active site" description="Proton acceptor" evidence="1">
    <location>
        <position position="225"/>
    </location>
</feature>
<keyword id="KW-0012">Acyltransferase</keyword>
<keyword id="KW-0441">Lipid A biosynthesis</keyword>
<keyword id="KW-0444">Lipid biosynthesis</keyword>
<keyword id="KW-0443">Lipid metabolism</keyword>
<keyword id="KW-1185">Reference proteome</keyword>
<keyword id="KW-0677">Repeat</keyword>
<keyword id="KW-0808">Transferase</keyword>
<gene>
    <name evidence="1" type="primary">lpxD</name>
    <name type="ordered locus">Veis_1448</name>
</gene>
<protein>
    <recommendedName>
        <fullName evidence="1">UDP-3-O-acylglucosamine N-acyltransferase</fullName>
        <ecNumber evidence="1">2.3.1.191</ecNumber>
    </recommendedName>
</protein>